<organism>
    <name type="scientific">Bacillus anthracis (strain CDC 684 / NRRL 3495)</name>
    <dbReference type="NCBI Taxonomy" id="568206"/>
    <lineage>
        <taxon>Bacteria</taxon>
        <taxon>Bacillati</taxon>
        <taxon>Bacillota</taxon>
        <taxon>Bacilli</taxon>
        <taxon>Bacillales</taxon>
        <taxon>Bacillaceae</taxon>
        <taxon>Bacillus</taxon>
        <taxon>Bacillus cereus group</taxon>
    </lineage>
</organism>
<reference key="1">
    <citation type="submission" date="2008-10" db="EMBL/GenBank/DDBJ databases">
        <title>Genome sequence of Bacillus anthracis str. CDC 684.</title>
        <authorList>
            <person name="Dodson R.J."/>
            <person name="Munk A.C."/>
            <person name="Brettin T."/>
            <person name="Bruce D."/>
            <person name="Detter C."/>
            <person name="Tapia R."/>
            <person name="Han C."/>
            <person name="Sutton G."/>
            <person name="Sims D."/>
        </authorList>
    </citation>
    <scope>NUCLEOTIDE SEQUENCE [LARGE SCALE GENOMIC DNA]</scope>
    <source>
        <strain>CDC 684 / NRRL 3495</strain>
    </source>
</reference>
<evidence type="ECO:0000255" key="1">
    <source>
        <dbReference type="HAMAP-Rule" id="MF_01364"/>
    </source>
</evidence>
<evidence type="ECO:0000305" key="2"/>
<keyword id="KW-0479">Metal-binding</keyword>
<keyword id="KW-0687">Ribonucleoprotein</keyword>
<keyword id="KW-0689">Ribosomal protein</keyword>
<keyword id="KW-0694">RNA-binding</keyword>
<keyword id="KW-0699">rRNA-binding</keyword>
<keyword id="KW-0862">Zinc</keyword>
<proteinExistence type="inferred from homology"/>
<name>RS14Z_BACAC</name>
<sequence length="61" mass="7296">MAKKSMIAKQKRTPKFKVQEYTRCERCGRPHSVYRKFKLCRICFRELAYKGQIPGVKKASW</sequence>
<comment type="function">
    <text evidence="1">Binds 16S rRNA, required for the assembly of 30S particles and may also be responsible for determining the conformation of the 16S rRNA at the A site.</text>
</comment>
<comment type="cofactor">
    <cofactor evidence="1">
        <name>Zn(2+)</name>
        <dbReference type="ChEBI" id="CHEBI:29105"/>
    </cofactor>
    <text evidence="1">Binds 1 zinc ion per subunit.</text>
</comment>
<comment type="subunit">
    <text evidence="1">Part of the 30S ribosomal subunit. Contacts proteins S3 and S10.</text>
</comment>
<comment type="similarity">
    <text evidence="1">Belongs to the universal ribosomal protein uS14 family. Zinc-binding uS14 subfamily.</text>
</comment>
<dbReference type="EMBL" id="CP001215">
    <property type="protein sequence ID" value="ACP12614.1"/>
    <property type="molecule type" value="Genomic_DNA"/>
</dbReference>
<dbReference type="RefSeq" id="WP_001085700.1">
    <property type="nucleotide sequence ID" value="NC_012581.1"/>
</dbReference>
<dbReference type="SMR" id="C3LJ95"/>
<dbReference type="GeneID" id="93010930"/>
<dbReference type="KEGG" id="bah:BAMEG_0139"/>
<dbReference type="HOGENOM" id="CLU_139869_3_0_9"/>
<dbReference type="GO" id="GO:0015935">
    <property type="term" value="C:small ribosomal subunit"/>
    <property type="evidence" value="ECO:0007669"/>
    <property type="project" value="TreeGrafter"/>
</dbReference>
<dbReference type="GO" id="GO:0019843">
    <property type="term" value="F:rRNA binding"/>
    <property type="evidence" value="ECO:0007669"/>
    <property type="project" value="UniProtKB-UniRule"/>
</dbReference>
<dbReference type="GO" id="GO:0003735">
    <property type="term" value="F:structural constituent of ribosome"/>
    <property type="evidence" value="ECO:0007669"/>
    <property type="project" value="InterPro"/>
</dbReference>
<dbReference type="GO" id="GO:0008270">
    <property type="term" value="F:zinc ion binding"/>
    <property type="evidence" value="ECO:0007669"/>
    <property type="project" value="UniProtKB-UniRule"/>
</dbReference>
<dbReference type="GO" id="GO:0006412">
    <property type="term" value="P:translation"/>
    <property type="evidence" value="ECO:0007669"/>
    <property type="project" value="UniProtKB-UniRule"/>
</dbReference>
<dbReference type="FunFam" id="4.10.830.10:FF:000001">
    <property type="entry name" value="30S ribosomal protein S14 type Z"/>
    <property type="match status" value="1"/>
</dbReference>
<dbReference type="Gene3D" id="4.10.830.10">
    <property type="entry name" value="30s Ribosomal Protein S14, Chain N"/>
    <property type="match status" value="1"/>
</dbReference>
<dbReference type="HAMAP" id="MF_01364_B">
    <property type="entry name" value="Ribosomal_uS14_2_B"/>
    <property type="match status" value="1"/>
</dbReference>
<dbReference type="InterPro" id="IPR001209">
    <property type="entry name" value="Ribosomal_uS14"/>
</dbReference>
<dbReference type="InterPro" id="IPR023053">
    <property type="entry name" value="Ribosomal_uS14_bact"/>
</dbReference>
<dbReference type="InterPro" id="IPR018271">
    <property type="entry name" value="Ribosomal_uS14_CS"/>
</dbReference>
<dbReference type="InterPro" id="IPR043140">
    <property type="entry name" value="Ribosomal_uS14_sf"/>
</dbReference>
<dbReference type="NCBIfam" id="NF005974">
    <property type="entry name" value="PRK08061.1"/>
    <property type="match status" value="1"/>
</dbReference>
<dbReference type="PANTHER" id="PTHR19836">
    <property type="entry name" value="30S RIBOSOMAL PROTEIN S14"/>
    <property type="match status" value="1"/>
</dbReference>
<dbReference type="PANTHER" id="PTHR19836:SF26">
    <property type="entry name" value="SMALL RIBOSOMAL SUBUNIT PROTEIN US14B"/>
    <property type="match status" value="1"/>
</dbReference>
<dbReference type="Pfam" id="PF00253">
    <property type="entry name" value="Ribosomal_S14"/>
    <property type="match status" value="1"/>
</dbReference>
<dbReference type="SUPFAM" id="SSF57716">
    <property type="entry name" value="Glucocorticoid receptor-like (DNA-binding domain)"/>
    <property type="match status" value="1"/>
</dbReference>
<dbReference type="PROSITE" id="PS00527">
    <property type="entry name" value="RIBOSOMAL_S14"/>
    <property type="match status" value="1"/>
</dbReference>
<protein>
    <recommendedName>
        <fullName evidence="1">Small ribosomal subunit protein uS14</fullName>
    </recommendedName>
    <alternativeName>
        <fullName evidence="2">30S ribosomal protein S14 type Z</fullName>
    </alternativeName>
</protein>
<gene>
    <name evidence="1" type="primary">rpsZ</name>
    <name evidence="1" type="synonym">rpsN</name>
    <name type="ordered locus">BAMEG_0139</name>
</gene>
<feature type="chain" id="PRO_1000166756" description="Small ribosomal subunit protein uS14">
    <location>
        <begin position="1"/>
        <end position="61"/>
    </location>
</feature>
<feature type="binding site" evidence="1">
    <location>
        <position position="24"/>
    </location>
    <ligand>
        <name>Zn(2+)</name>
        <dbReference type="ChEBI" id="CHEBI:29105"/>
    </ligand>
</feature>
<feature type="binding site" evidence="1">
    <location>
        <position position="27"/>
    </location>
    <ligand>
        <name>Zn(2+)</name>
        <dbReference type="ChEBI" id="CHEBI:29105"/>
    </ligand>
</feature>
<feature type="binding site" evidence="1">
    <location>
        <position position="40"/>
    </location>
    <ligand>
        <name>Zn(2+)</name>
        <dbReference type="ChEBI" id="CHEBI:29105"/>
    </ligand>
</feature>
<feature type="binding site" evidence="1">
    <location>
        <position position="43"/>
    </location>
    <ligand>
        <name>Zn(2+)</name>
        <dbReference type="ChEBI" id="CHEBI:29105"/>
    </ligand>
</feature>
<accession>C3LJ95</accession>